<evidence type="ECO:0000255" key="1">
    <source>
        <dbReference type="HAMAP-Rule" id="MF_01227"/>
    </source>
</evidence>
<feature type="chain" id="PRO_1000139421" description="CTP synthase">
    <location>
        <begin position="1"/>
        <end position="545"/>
    </location>
</feature>
<feature type="domain" description="Glutamine amidotransferase type-1" evidence="1">
    <location>
        <begin position="291"/>
        <end position="542"/>
    </location>
</feature>
<feature type="region of interest" description="Amidoligase domain" evidence="1">
    <location>
        <begin position="1"/>
        <end position="266"/>
    </location>
</feature>
<feature type="active site" description="Nucleophile; for glutamine hydrolysis" evidence="1">
    <location>
        <position position="379"/>
    </location>
</feature>
<feature type="active site" evidence="1">
    <location>
        <position position="515"/>
    </location>
</feature>
<feature type="active site" evidence="1">
    <location>
        <position position="517"/>
    </location>
</feature>
<feature type="binding site" evidence="1">
    <location>
        <position position="14"/>
    </location>
    <ligand>
        <name>CTP</name>
        <dbReference type="ChEBI" id="CHEBI:37563"/>
        <note>allosteric inhibitor</note>
    </ligand>
</feature>
<feature type="binding site" evidence="1">
    <location>
        <position position="14"/>
    </location>
    <ligand>
        <name>UTP</name>
        <dbReference type="ChEBI" id="CHEBI:46398"/>
    </ligand>
</feature>
<feature type="binding site" evidence="1">
    <location>
        <begin position="15"/>
        <end position="20"/>
    </location>
    <ligand>
        <name>ATP</name>
        <dbReference type="ChEBI" id="CHEBI:30616"/>
    </ligand>
</feature>
<feature type="binding site" evidence="1">
    <location>
        <position position="72"/>
    </location>
    <ligand>
        <name>ATP</name>
        <dbReference type="ChEBI" id="CHEBI:30616"/>
    </ligand>
</feature>
<feature type="binding site" evidence="1">
    <location>
        <position position="72"/>
    </location>
    <ligand>
        <name>Mg(2+)</name>
        <dbReference type="ChEBI" id="CHEBI:18420"/>
    </ligand>
</feature>
<feature type="binding site" evidence="1">
    <location>
        <position position="140"/>
    </location>
    <ligand>
        <name>Mg(2+)</name>
        <dbReference type="ChEBI" id="CHEBI:18420"/>
    </ligand>
</feature>
<feature type="binding site" evidence="1">
    <location>
        <begin position="147"/>
        <end position="149"/>
    </location>
    <ligand>
        <name>CTP</name>
        <dbReference type="ChEBI" id="CHEBI:37563"/>
        <note>allosteric inhibitor</note>
    </ligand>
</feature>
<feature type="binding site" evidence="1">
    <location>
        <begin position="187"/>
        <end position="192"/>
    </location>
    <ligand>
        <name>CTP</name>
        <dbReference type="ChEBI" id="CHEBI:37563"/>
        <note>allosteric inhibitor</note>
    </ligand>
</feature>
<feature type="binding site" evidence="1">
    <location>
        <begin position="187"/>
        <end position="192"/>
    </location>
    <ligand>
        <name>UTP</name>
        <dbReference type="ChEBI" id="CHEBI:46398"/>
    </ligand>
</feature>
<feature type="binding site" evidence="1">
    <location>
        <position position="223"/>
    </location>
    <ligand>
        <name>CTP</name>
        <dbReference type="ChEBI" id="CHEBI:37563"/>
        <note>allosteric inhibitor</note>
    </ligand>
</feature>
<feature type="binding site" evidence="1">
    <location>
        <position position="223"/>
    </location>
    <ligand>
        <name>UTP</name>
        <dbReference type="ChEBI" id="CHEBI:46398"/>
    </ligand>
</feature>
<feature type="binding site" evidence="1">
    <location>
        <begin position="239"/>
        <end position="241"/>
    </location>
    <ligand>
        <name>ATP</name>
        <dbReference type="ChEBI" id="CHEBI:30616"/>
    </ligand>
</feature>
<feature type="binding site" evidence="1">
    <location>
        <position position="352"/>
    </location>
    <ligand>
        <name>L-glutamine</name>
        <dbReference type="ChEBI" id="CHEBI:58359"/>
    </ligand>
</feature>
<feature type="binding site" evidence="1">
    <location>
        <begin position="380"/>
        <end position="383"/>
    </location>
    <ligand>
        <name>L-glutamine</name>
        <dbReference type="ChEBI" id="CHEBI:58359"/>
    </ligand>
</feature>
<feature type="binding site" evidence="1">
    <location>
        <position position="403"/>
    </location>
    <ligand>
        <name>L-glutamine</name>
        <dbReference type="ChEBI" id="CHEBI:58359"/>
    </ligand>
</feature>
<feature type="binding site" evidence="1">
    <location>
        <position position="470"/>
    </location>
    <ligand>
        <name>L-glutamine</name>
        <dbReference type="ChEBI" id="CHEBI:58359"/>
    </ligand>
</feature>
<gene>
    <name evidence="1" type="primary">pyrG</name>
    <name type="ordered locus">CKO_04135</name>
</gene>
<protein>
    <recommendedName>
        <fullName evidence="1">CTP synthase</fullName>
        <ecNumber evidence="1">6.3.4.2</ecNumber>
    </recommendedName>
    <alternativeName>
        <fullName evidence="1">Cytidine 5'-triphosphate synthase</fullName>
    </alternativeName>
    <alternativeName>
        <fullName evidence="1">Cytidine triphosphate synthetase</fullName>
        <shortName evidence="1">CTP synthetase</shortName>
        <shortName evidence="1">CTPS</shortName>
    </alternativeName>
    <alternativeName>
        <fullName evidence="1">UTP--ammonia ligase</fullName>
    </alternativeName>
</protein>
<accession>A8ANY8</accession>
<proteinExistence type="inferred from homology"/>
<reference key="1">
    <citation type="submission" date="2007-08" db="EMBL/GenBank/DDBJ databases">
        <authorList>
            <consortium name="The Citrobacter koseri Genome Sequencing Project"/>
            <person name="McClelland M."/>
            <person name="Sanderson E.K."/>
            <person name="Porwollik S."/>
            <person name="Spieth J."/>
            <person name="Clifton W.S."/>
            <person name="Latreille P."/>
            <person name="Courtney L."/>
            <person name="Wang C."/>
            <person name="Pepin K."/>
            <person name="Bhonagiri V."/>
            <person name="Nash W."/>
            <person name="Johnson M."/>
            <person name="Thiruvilangam P."/>
            <person name="Wilson R."/>
        </authorList>
    </citation>
    <scope>NUCLEOTIDE SEQUENCE [LARGE SCALE GENOMIC DNA]</scope>
    <source>
        <strain>ATCC BAA-895 / CDC 4225-83 / SGSC4696</strain>
    </source>
</reference>
<organism>
    <name type="scientific">Citrobacter koseri (strain ATCC BAA-895 / CDC 4225-83 / SGSC4696)</name>
    <dbReference type="NCBI Taxonomy" id="290338"/>
    <lineage>
        <taxon>Bacteria</taxon>
        <taxon>Pseudomonadati</taxon>
        <taxon>Pseudomonadota</taxon>
        <taxon>Gammaproteobacteria</taxon>
        <taxon>Enterobacterales</taxon>
        <taxon>Enterobacteriaceae</taxon>
        <taxon>Citrobacter</taxon>
    </lineage>
</organism>
<name>PYRG_CITK8</name>
<keyword id="KW-0067">ATP-binding</keyword>
<keyword id="KW-0315">Glutamine amidotransferase</keyword>
<keyword id="KW-0436">Ligase</keyword>
<keyword id="KW-0460">Magnesium</keyword>
<keyword id="KW-0479">Metal-binding</keyword>
<keyword id="KW-0547">Nucleotide-binding</keyword>
<keyword id="KW-0665">Pyrimidine biosynthesis</keyword>
<keyword id="KW-1185">Reference proteome</keyword>
<comment type="function">
    <text evidence="1">Catalyzes the ATP-dependent amination of UTP to CTP with either L-glutamine or ammonia as the source of nitrogen. Regulates intracellular CTP levels through interactions with the four ribonucleotide triphosphates.</text>
</comment>
<comment type="catalytic activity">
    <reaction evidence="1">
        <text>UTP + L-glutamine + ATP + H2O = CTP + L-glutamate + ADP + phosphate + 2 H(+)</text>
        <dbReference type="Rhea" id="RHEA:26426"/>
        <dbReference type="ChEBI" id="CHEBI:15377"/>
        <dbReference type="ChEBI" id="CHEBI:15378"/>
        <dbReference type="ChEBI" id="CHEBI:29985"/>
        <dbReference type="ChEBI" id="CHEBI:30616"/>
        <dbReference type="ChEBI" id="CHEBI:37563"/>
        <dbReference type="ChEBI" id="CHEBI:43474"/>
        <dbReference type="ChEBI" id="CHEBI:46398"/>
        <dbReference type="ChEBI" id="CHEBI:58359"/>
        <dbReference type="ChEBI" id="CHEBI:456216"/>
        <dbReference type="EC" id="6.3.4.2"/>
    </reaction>
</comment>
<comment type="catalytic activity">
    <reaction evidence="1">
        <text>L-glutamine + H2O = L-glutamate + NH4(+)</text>
        <dbReference type="Rhea" id="RHEA:15889"/>
        <dbReference type="ChEBI" id="CHEBI:15377"/>
        <dbReference type="ChEBI" id="CHEBI:28938"/>
        <dbReference type="ChEBI" id="CHEBI:29985"/>
        <dbReference type="ChEBI" id="CHEBI:58359"/>
    </reaction>
</comment>
<comment type="catalytic activity">
    <reaction evidence="1">
        <text>UTP + NH4(+) + ATP = CTP + ADP + phosphate + 2 H(+)</text>
        <dbReference type="Rhea" id="RHEA:16597"/>
        <dbReference type="ChEBI" id="CHEBI:15378"/>
        <dbReference type="ChEBI" id="CHEBI:28938"/>
        <dbReference type="ChEBI" id="CHEBI:30616"/>
        <dbReference type="ChEBI" id="CHEBI:37563"/>
        <dbReference type="ChEBI" id="CHEBI:43474"/>
        <dbReference type="ChEBI" id="CHEBI:46398"/>
        <dbReference type="ChEBI" id="CHEBI:456216"/>
    </reaction>
</comment>
<comment type="activity regulation">
    <text evidence="1">Allosterically activated by GTP, when glutamine is the substrate; GTP has no effect on the reaction when ammonia is the substrate. The allosteric effector GTP functions by stabilizing the protein conformation that binds the tetrahedral intermediate(s) formed during glutamine hydrolysis. Inhibited by the product CTP, via allosteric rather than competitive inhibition.</text>
</comment>
<comment type="pathway">
    <text evidence="1">Pyrimidine metabolism; CTP biosynthesis via de novo pathway; CTP from UDP: step 2/2.</text>
</comment>
<comment type="subunit">
    <text evidence="1">Homotetramer.</text>
</comment>
<comment type="miscellaneous">
    <text evidence="1">CTPSs have evolved a hybrid strategy for distinguishing between UTP and CTP. The overlapping regions of the product feedback inhibitory and substrate sites recognize a common feature in both compounds, the triphosphate moiety. To differentiate isosteric substrate and product pyrimidine rings, an additional pocket far from the expected kinase/ligase catalytic site, specifically recognizes the cytosine and ribose portions of the product inhibitor.</text>
</comment>
<comment type="similarity">
    <text evidence="1">Belongs to the CTP synthase family.</text>
</comment>
<dbReference type="EC" id="6.3.4.2" evidence="1"/>
<dbReference type="EMBL" id="CP000822">
    <property type="protein sequence ID" value="ABV15201.1"/>
    <property type="molecule type" value="Genomic_DNA"/>
</dbReference>
<dbReference type="RefSeq" id="WP_012134890.1">
    <property type="nucleotide sequence ID" value="NC_009792.1"/>
</dbReference>
<dbReference type="SMR" id="A8ANY8"/>
<dbReference type="STRING" id="290338.CKO_04135"/>
<dbReference type="MEROPS" id="C26.964"/>
<dbReference type="GeneID" id="45137768"/>
<dbReference type="KEGG" id="cko:CKO_04135"/>
<dbReference type="HOGENOM" id="CLU_011675_5_0_6"/>
<dbReference type="OrthoDB" id="9801107at2"/>
<dbReference type="UniPathway" id="UPA00159">
    <property type="reaction ID" value="UER00277"/>
</dbReference>
<dbReference type="Proteomes" id="UP000008148">
    <property type="component" value="Chromosome"/>
</dbReference>
<dbReference type="GO" id="GO:0005829">
    <property type="term" value="C:cytosol"/>
    <property type="evidence" value="ECO:0007669"/>
    <property type="project" value="TreeGrafter"/>
</dbReference>
<dbReference type="GO" id="GO:0005524">
    <property type="term" value="F:ATP binding"/>
    <property type="evidence" value="ECO:0007669"/>
    <property type="project" value="UniProtKB-KW"/>
</dbReference>
<dbReference type="GO" id="GO:0003883">
    <property type="term" value="F:CTP synthase activity"/>
    <property type="evidence" value="ECO:0007669"/>
    <property type="project" value="UniProtKB-UniRule"/>
</dbReference>
<dbReference type="GO" id="GO:0004359">
    <property type="term" value="F:glutaminase activity"/>
    <property type="evidence" value="ECO:0007669"/>
    <property type="project" value="RHEA"/>
</dbReference>
<dbReference type="GO" id="GO:0042802">
    <property type="term" value="F:identical protein binding"/>
    <property type="evidence" value="ECO:0007669"/>
    <property type="project" value="TreeGrafter"/>
</dbReference>
<dbReference type="GO" id="GO:0046872">
    <property type="term" value="F:metal ion binding"/>
    <property type="evidence" value="ECO:0007669"/>
    <property type="project" value="UniProtKB-KW"/>
</dbReference>
<dbReference type="GO" id="GO:0044210">
    <property type="term" value="P:'de novo' CTP biosynthetic process"/>
    <property type="evidence" value="ECO:0007669"/>
    <property type="project" value="UniProtKB-UniRule"/>
</dbReference>
<dbReference type="GO" id="GO:0019856">
    <property type="term" value="P:pyrimidine nucleobase biosynthetic process"/>
    <property type="evidence" value="ECO:0007669"/>
    <property type="project" value="TreeGrafter"/>
</dbReference>
<dbReference type="CDD" id="cd03113">
    <property type="entry name" value="CTPS_N"/>
    <property type="match status" value="1"/>
</dbReference>
<dbReference type="CDD" id="cd01746">
    <property type="entry name" value="GATase1_CTP_Synthase"/>
    <property type="match status" value="1"/>
</dbReference>
<dbReference type="FunFam" id="3.40.50.300:FF:000009">
    <property type="entry name" value="CTP synthase"/>
    <property type="match status" value="1"/>
</dbReference>
<dbReference type="FunFam" id="3.40.50.880:FF:000002">
    <property type="entry name" value="CTP synthase"/>
    <property type="match status" value="1"/>
</dbReference>
<dbReference type="Gene3D" id="3.40.50.880">
    <property type="match status" value="1"/>
</dbReference>
<dbReference type="Gene3D" id="3.40.50.300">
    <property type="entry name" value="P-loop containing nucleotide triphosphate hydrolases"/>
    <property type="match status" value="1"/>
</dbReference>
<dbReference type="HAMAP" id="MF_01227">
    <property type="entry name" value="PyrG"/>
    <property type="match status" value="1"/>
</dbReference>
<dbReference type="InterPro" id="IPR029062">
    <property type="entry name" value="Class_I_gatase-like"/>
</dbReference>
<dbReference type="InterPro" id="IPR004468">
    <property type="entry name" value="CTP_synthase"/>
</dbReference>
<dbReference type="InterPro" id="IPR017456">
    <property type="entry name" value="CTP_synthase_N"/>
</dbReference>
<dbReference type="InterPro" id="IPR017926">
    <property type="entry name" value="GATASE"/>
</dbReference>
<dbReference type="InterPro" id="IPR033828">
    <property type="entry name" value="GATase1_CTP_Synthase"/>
</dbReference>
<dbReference type="InterPro" id="IPR027417">
    <property type="entry name" value="P-loop_NTPase"/>
</dbReference>
<dbReference type="NCBIfam" id="NF003792">
    <property type="entry name" value="PRK05380.1"/>
    <property type="match status" value="1"/>
</dbReference>
<dbReference type="NCBIfam" id="TIGR00337">
    <property type="entry name" value="PyrG"/>
    <property type="match status" value="1"/>
</dbReference>
<dbReference type="PANTHER" id="PTHR11550">
    <property type="entry name" value="CTP SYNTHASE"/>
    <property type="match status" value="1"/>
</dbReference>
<dbReference type="PANTHER" id="PTHR11550:SF0">
    <property type="entry name" value="CTP SYNTHASE-RELATED"/>
    <property type="match status" value="1"/>
</dbReference>
<dbReference type="Pfam" id="PF06418">
    <property type="entry name" value="CTP_synth_N"/>
    <property type="match status" value="1"/>
</dbReference>
<dbReference type="Pfam" id="PF00117">
    <property type="entry name" value="GATase"/>
    <property type="match status" value="1"/>
</dbReference>
<dbReference type="SUPFAM" id="SSF52317">
    <property type="entry name" value="Class I glutamine amidotransferase-like"/>
    <property type="match status" value="1"/>
</dbReference>
<dbReference type="SUPFAM" id="SSF52540">
    <property type="entry name" value="P-loop containing nucleoside triphosphate hydrolases"/>
    <property type="match status" value="1"/>
</dbReference>
<dbReference type="PROSITE" id="PS51273">
    <property type="entry name" value="GATASE_TYPE_1"/>
    <property type="match status" value="1"/>
</dbReference>
<sequence length="545" mass="60202">MTTNYIFVTGGVVSSLGKGIAAASLAAILEARGLNVTIMKLDPYINVDPGTMSPIQHGEVFVTEDGAETDLDLGHYERFIRTKMSRRNNFTTGRIYSDVLRKERRGDYLGATVQVIPHITNAIKERIIEGGEGHDVVLVEIGGTVGDIESLPFLEAIRQLAVDIGREHALFMHLTLVPYMAAAGEVKTKPTQHSVKELLSIGIQPDILICRSDRAVPANERAKIALFCNVAEKAVISLKDVDSIYKIPGMLKSQGLDDYICKRFSLDCPEANLAEWEQVIYEEANPAGEVTIGMVGKYIELPDAYKSVIEALKHGGLKNRVTVNIKLIDSQDVETRGVEILKDLDAILIPGGFGYRGVEGKVATARYARENNIPYLGICLGMQVALIEFARNVAGMENANSTEFVPDCKYPVVALITEWRDENGNVEVRTEKSDLGGTMRLGAQMCQLSDESLVRQMYGTPTITERHRHRYEVNNMLLNQIEAAGLRIAGRSGDDQLVEIIEVPNHPWFVACQFHPEFTSTPRDGHPLFAGFVKAASEYQKRQAK</sequence>